<protein>
    <recommendedName>
        <fullName evidence="4">VQ motif-containing protein 8, chloroplastic</fullName>
        <shortName evidence="4">AtVQ8</shortName>
    </recommendedName>
</protein>
<dbReference type="EMBL" id="AC011915">
    <property type="protein sequence ID" value="AAG52394.1"/>
    <property type="molecule type" value="Genomic_DNA"/>
</dbReference>
<dbReference type="EMBL" id="CP002684">
    <property type="protein sequence ID" value="AEE34795.1"/>
    <property type="molecule type" value="Genomic_DNA"/>
</dbReference>
<dbReference type="EMBL" id="AK117732">
    <property type="protein sequence ID" value="BAC42381.1"/>
    <property type="molecule type" value="mRNA"/>
</dbReference>
<dbReference type="EMBL" id="BT003665">
    <property type="protein sequence ID" value="AAO39893.1"/>
    <property type="molecule type" value="mRNA"/>
</dbReference>
<dbReference type="PIR" id="E96708">
    <property type="entry name" value="E96708"/>
</dbReference>
<dbReference type="IntAct" id="Q9CA36">
    <property type="interactions" value="3"/>
</dbReference>
<dbReference type="STRING" id="3702.Q9CA36"/>
<dbReference type="iPTMnet" id="Q9CA36"/>
<dbReference type="PaxDb" id="3702-AT1G68450.1"/>
<dbReference type="EnsemblPlants" id="AT1G68450.1">
    <property type="protein sequence ID" value="AT1G68450.1"/>
    <property type="gene ID" value="AT1G68450"/>
</dbReference>
<dbReference type="Gramene" id="AT1G68450.1">
    <property type="protein sequence ID" value="AT1G68450.1"/>
    <property type="gene ID" value="AT1G68450"/>
</dbReference>
<dbReference type="KEGG" id="ath:AT1G68450"/>
<dbReference type="Araport" id="AT1G68450"/>
<dbReference type="TAIR" id="AT1G68450">
    <property type="gene designation" value="PDE337"/>
</dbReference>
<dbReference type="eggNOG" id="ENOG502S37N">
    <property type="taxonomic scope" value="Eukaryota"/>
</dbReference>
<dbReference type="HOGENOM" id="CLU_102374_0_0_1"/>
<dbReference type="InParanoid" id="Q9CA36"/>
<dbReference type="OMA" id="RCNEING"/>
<dbReference type="PhylomeDB" id="Q9CA36"/>
<dbReference type="PRO" id="PR:Q9CA36"/>
<dbReference type="Proteomes" id="UP000006548">
    <property type="component" value="Chromosome 1"/>
</dbReference>
<dbReference type="ExpressionAtlas" id="Q9CA36">
    <property type="expression patterns" value="baseline and differential"/>
</dbReference>
<dbReference type="GO" id="GO:0009507">
    <property type="term" value="C:chloroplast"/>
    <property type="evidence" value="ECO:0007669"/>
    <property type="project" value="UniProtKB-SubCell"/>
</dbReference>
<dbReference type="InterPro" id="IPR008889">
    <property type="entry name" value="VQ"/>
</dbReference>
<dbReference type="InterPro" id="IPR039607">
    <property type="entry name" value="VQ_8/17/18/20/21/25"/>
</dbReference>
<dbReference type="PANTHER" id="PTHR33143">
    <property type="entry name" value="F16F4.1 PROTEIN-RELATED"/>
    <property type="match status" value="1"/>
</dbReference>
<dbReference type="PANTHER" id="PTHR33143:SF76">
    <property type="entry name" value="VQ MOTIF-CONTAINING PROTEIN 8, CHLOROPLASTIC"/>
    <property type="match status" value="1"/>
</dbReference>
<dbReference type="Pfam" id="PF05678">
    <property type="entry name" value="VQ"/>
    <property type="match status" value="1"/>
</dbReference>
<sequence>MIPTRCNEINGSRPSSLKLAGESHTIKKTSSCKSKPRPHGRASPVIIYAHSPKVIHTRAEDFMALVQRLTGLDEIIRRNTSESSSSVVTEEVNVGDDNTAAPFSQDRTQRQKLTDMPLFTPSSMTLFGSPTQLMYMSPNRTDSFRPLVFKSE</sequence>
<proteinExistence type="evidence at protein level"/>
<keyword id="KW-0150">Chloroplast</keyword>
<keyword id="KW-0934">Plastid</keyword>
<keyword id="KW-1185">Reference proteome</keyword>
<keyword id="KW-0809">Transit peptide</keyword>
<evidence type="ECO:0000255" key="1"/>
<evidence type="ECO:0000256" key="2">
    <source>
        <dbReference type="SAM" id="MobiDB-lite"/>
    </source>
</evidence>
<evidence type="ECO:0000269" key="3">
    <source>
    </source>
</evidence>
<evidence type="ECO:0000303" key="4">
    <source>
    </source>
</evidence>
<evidence type="ECO:0000305" key="5"/>
<evidence type="ECO:0000305" key="6">
    <source>
    </source>
</evidence>
<evidence type="ECO:0000312" key="7">
    <source>
        <dbReference type="Araport" id="AT1G68450"/>
    </source>
</evidence>
<evidence type="ECO:0000312" key="8">
    <source>
        <dbReference type="EMBL" id="AAG52394.1"/>
    </source>
</evidence>
<gene>
    <name evidence="4" type="primary">VQ8</name>
    <name evidence="7" type="ordered locus">At1g68450</name>
    <name evidence="8" type="ORF">T26J14.2</name>
</gene>
<accession>Q9CA36</accession>
<feature type="transit peptide" description="Chloroplast" evidence="1">
    <location>
        <begin position="1"/>
        <end position="58"/>
    </location>
</feature>
<feature type="chain" id="PRO_0000432310" description="VQ motif-containing protein 8, chloroplastic" evidence="1">
    <location>
        <begin position="59"/>
        <end position="152"/>
    </location>
</feature>
<feature type="region of interest" description="Disordered" evidence="2">
    <location>
        <begin position="1"/>
        <end position="42"/>
    </location>
</feature>
<feature type="region of interest" description="Disordered" evidence="2">
    <location>
        <begin position="80"/>
        <end position="108"/>
    </location>
</feature>
<feature type="short sequence motif" description="VQ" evidence="5">
    <location>
        <begin position="62"/>
        <end position="71"/>
    </location>
</feature>
<feature type="compositionally biased region" description="Low complexity" evidence="2">
    <location>
        <begin position="81"/>
        <end position="92"/>
    </location>
</feature>
<organism>
    <name type="scientific">Arabidopsis thaliana</name>
    <name type="common">Mouse-ear cress</name>
    <dbReference type="NCBI Taxonomy" id="3702"/>
    <lineage>
        <taxon>Eukaryota</taxon>
        <taxon>Viridiplantae</taxon>
        <taxon>Streptophyta</taxon>
        <taxon>Embryophyta</taxon>
        <taxon>Tracheophyta</taxon>
        <taxon>Spermatophyta</taxon>
        <taxon>Magnoliopsida</taxon>
        <taxon>eudicotyledons</taxon>
        <taxon>Gunneridae</taxon>
        <taxon>Pentapetalae</taxon>
        <taxon>rosids</taxon>
        <taxon>malvids</taxon>
        <taxon>Brassicales</taxon>
        <taxon>Brassicaceae</taxon>
        <taxon>Camelineae</taxon>
        <taxon>Arabidopsis</taxon>
    </lineage>
</organism>
<comment type="function">
    <text evidence="6">May be involved in chloroplast development.</text>
</comment>
<comment type="interaction">
    <interactant intactId="EBI-4451970">
        <id>Q9CA36</id>
    </interactant>
    <interactant intactId="EBI-4431481">
        <id>Q9FFS3</id>
        <label>WRKY24</label>
    </interactant>
    <organismsDiffer>false</organismsDiffer>
    <experiments>4</experiments>
</comment>
<comment type="subcellular location">
    <subcellularLocation>
        <location evidence="1">Plastid</location>
        <location evidence="1">Chloroplast</location>
    </subcellularLocation>
</comment>
<comment type="disruption phenotype">
    <text evidence="3">Pale-green and stunted growth phenotypes.</text>
</comment>
<reference key="1">
    <citation type="journal article" date="2000" name="Nature">
        <title>Sequence and analysis of chromosome 1 of the plant Arabidopsis thaliana.</title>
        <authorList>
            <person name="Theologis A."/>
            <person name="Ecker J.R."/>
            <person name="Palm C.J."/>
            <person name="Federspiel N.A."/>
            <person name="Kaul S."/>
            <person name="White O."/>
            <person name="Alonso J."/>
            <person name="Altafi H."/>
            <person name="Araujo R."/>
            <person name="Bowman C.L."/>
            <person name="Brooks S.Y."/>
            <person name="Buehler E."/>
            <person name="Chan A."/>
            <person name="Chao Q."/>
            <person name="Chen H."/>
            <person name="Cheuk R.F."/>
            <person name="Chin C.W."/>
            <person name="Chung M.K."/>
            <person name="Conn L."/>
            <person name="Conway A.B."/>
            <person name="Conway A.R."/>
            <person name="Creasy T.H."/>
            <person name="Dewar K."/>
            <person name="Dunn P."/>
            <person name="Etgu P."/>
            <person name="Feldblyum T.V."/>
            <person name="Feng J.-D."/>
            <person name="Fong B."/>
            <person name="Fujii C.Y."/>
            <person name="Gill J.E."/>
            <person name="Goldsmith A.D."/>
            <person name="Haas B."/>
            <person name="Hansen N.F."/>
            <person name="Hughes B."/>
            <person name="Huizar L."/>
            <person name="Hunter J.L."/>
            <person name="Jenkins J."/>
            <person name="Johnson-Hopson C."/>
            <person name="Khan S."/>
            <person name="Khaykin E."/>
            <person name="Kim C.J."/>
            <person name="Koo H.L."/>
            <person name="Kremenetskaia I."/>
            <person name="Kurtz D.B."/>
            <person name="Kwan A."/>
            <person name="Lam B."/>
            <person name="Langin-Hooper S."/>
            <person name="Lee A."/>
            <person name="Lee J.M."/>
            <person name="Lenz C.A."/>
            <person name="Li J.H."/>
            <person name="Li Y.-P."/>
            <person name="Lin X."/>
            <person name="Liu S.X."/>
            <person name="Liu Z.A."/>
            <person name="Luros J.S."/>
            <person name="Maiti R."/>
            <person name="Marziali A."/>
            <person name="Militscher J."/>
            <person name="Miranda M."/>
            <person name="Nguyen M."/>
            <person name="Nierman W.C."/>
            <person name="Osborne B.I."/>
            <person name="Pai G."/>
            <person name="Peterson J."/>
            <person name="Pham P.K."/>
            <person name="Rizzo M."/>
            <person name="Rooney T."/>
            <person name="Rowley D."/>
            <person name="Sakano H."/>
            <person name="Salzberg S.L."/>
            <person name="Schwartz J.R."/>
            <person name="Shinn P."/>
            <person name="Southwick A.M."/>
            <person name="Sun H."/>
            <person name="Tallon L.J."/>
            <person name="Tambunga G."/>
            <person name="Toriumi M.J."/>
            <person name="Town C.D."/>
            <person name="Utterback T."/>
            <person name="Van Aken S."/>
            <person name="Vaysberg M."/>
            <person name="Vysotskaia V.S."/>
            <person name="Walker M."/>
            <person name="Wu D."/>
            <person name="Yu G."/>
            <person name="Fraser C.M."/>
            <person name="Venter J.C."/>
            <person name="Davis R.W."/>
        </authorList>
    </citation>
    <scope>NUCLEOTIDE SEQUENCE [LARGE SCALE GENOMIC DNA]</scope>
    <source>
        <strain>cv. Columbia</strain>
    </source>
</reference>
<reference key="2">
    <citation type="journal article" date="2017" name="Plant J.">
        <title>Araport11: a complete reannotation of the Arabidopsis thaliana reference genome.</title>
        <authorList>
            <person name="Cheng C.Y."/>
            <person name="Krishnakumar V."/>
            <person name="Chan A.P."/>
            <person name="Thibaud-Nissen F."/>
            <person name="Schobel S."/>
            <person name="Town C.D."/>
        </authorList>
    </citation>
    <scope>GENOME REANNOTATION</scope>
    <source>
        <strain>cv. Columbia</strain>
    </source>
</reference>
<reference key="3">
    <citation type="journal article" date="2002" name="Science">
        <title>Functional annotation of a full-length Arabidopsis cDNA collection.</title>
        <authorList>
            <person name="Seki M."/>
            <person name="Narusaka M."/>
            <person name="Kamiya A."/>
            <person name="Ishida J."/>
            <person name="Satou M."/>
            <person name="Sakurai T."/>
            <person name="Nakajima M."/>
            <person name="Enju A."/>
            <person name="Akiyama K."/>
            <person name="Oono Y."/>
            <person name="Muramatsu M."/>
            <person name="Hayashizaki Y."/>
            <person name="Kawai J."/>
            <person name="Carninci P."/>
            <person name="Itoh M."/>
            <person name="Ishii Y."/>
            <person name="Arakawa T."/>
            <person name="Shibata K."/>
            <person name="Shinagawa A."/>
            <person name="Shinozaki K."/>
        </authorList>
    </citation>
    <scope>NUCLEOTIDE SEQUENCE [LARGE SCALE MRNA]</scope>
    <source>
        <strain>cv. Columbia</strain>
    </source>
</reference>
<reference key="4">
    <citation type="journal article" date="2003" name="Science">
        <title>Empirical analysis of transcriptional activity in the Arabidopsis genome.</title>
        <authorList>
            <person name="Yamada K."/>
            <person name="Lim J."/>
            <person name="Dale J.M."/>
            <person name="Chen H."/>
            <person name="Shinn P."/>
            <person name="Palm C.J."/>
            <person name="Southwick A.M."/>
            <person name="Wu H.C."/>
            <person name="Kim C.J."/>
            <person name="Nguyen M."/>
            <person name="Pham P.K."/>
            <person name="Cheuk R.F."/>
            <person name="Karlin-Newmann G."/>
            <person name="Liu S.X."/>
            <person name="Lam B."/>
            <person name="Sakano H."/>
            <person name="Wu T."/>
            <person name="Yu G."/>
            <person name="Miranda M."/>
            <person name="Quach H.L."/>
            <person name="Tripp M."/>
            <person name="Chang C.H."/>
            <person name="Lee J.M."/>
            <person name="Toriumi M.J."/>
            <person name="Chan M.M."/>
            <person name="Tang C.C."/>
            <person name="Onodera C.S."/>
            <person name="Deng J.M."/>
            <person name="Akiyama K."/>
            <person name="Ansari Y."/>
            <person name="Arakawa T."/>
            <person name="Banh J."/>
            <person name="Banno F."/>
            <person name="Bowser L."/>
            <person name="Brooks S.Y."/>
            <person name="Carninci P."/>
            <person name="Chao Q."/>
            <person name="Choy N."/>
            <person name="Enju A."/>
            <person name="Goldsmith A.D."/>
            <person name="Gurjal M."/>
            <person name="Hansen N.F."/>
            <person name="Hayashizaki Y."/>
            <person name="Johnson-Hopson C."/>
            <person name="Hsuan V.W."/>
            <person name="Iida K."/>
            <person name="Karnes M."/>
            <person name="Khan S."/>
            <person name="Koesema E."/>
            <person name="Ishida J."/>
            <person name="Jiang P.X."/>
            <person name="Jones T."/>
            <person name="Kawai J."/>
            <person name="Kamiya A."/>
            <person name="Meyers C."/>
            <person name="Nakajima M."/>
            <person name="Narusaka M."/>
            <person name="Seki M."/>
            <person name="Sakurai T."/>
            <person name="Satou M."/>
            <person name="Tamse R."/>
            <person name="Vaysberg M."/>
            <person name="Wallender E.K."/>
            <person name="Wong C."/>
            <person name="Yamamura Y."/>
            <person name="Yuan S."/>
            <person name="Shinozaki K."/>
            <person name="Davis R.W."/>
            <person name="Theologis A."/>
            <person name="Ecker J.R."/>
        </authorList>
    </citation>
    <scope>NUCLEOTIDE SEQUENCE [LARGE SCALE MRNA]</scope>
    <source>
        <strain>cv. Columbia</strain>
    </source>
</reference>
<reference key="5">
    <citation type="journal article" date="2012" name="Plant Physiol.">
        <title>Structural and functional analysis of VQ motif-containing proteins in Arabidopsis as interacting proteins of WRKY transcription factors.</title>
        <authorList>
            <person name="Cheng Y."/>
            <person name="Zhou Y."/>
            <person name="Yang Y."/>
            <person name="Chi Y.J."/>
            <person name="Zhou J."/>
            <person name="Chen J.Y."/>
            <person name="Wang F."/>
            <person name="Fan B."/>
            <person name="Shi K."/>
            <person name="Zhou Y.H."/>
            <person name="Yu J.Q."/>
            <person name="Chen Z."/>
        </authorList>
    </citation>
    <scope>GENE FAMILY</scope>
    <scope>NOMENCLATURE</scope>
    <scope>DISRUPTION PHENOTYPE</scope>
</reference>
<name>VQ8_ARATH</name>